<name>CYF_TOBAC</name>
<geneLocation type="chloroplast"/>
<reference key="1">
    <citation type="journal article" date="1986" name="EMBO J.">
        <title>The complete nucleotide sequence of the tobacco chloroplast genome: its gene organization and expression.</title>
        <authorList>
            <person name="Shinozaki K."/>
            <person name="Ohme M."/>
            <person name="Tanaka M."/>
            <person name="Wakasugi T."/>
            <person name="Hayashida N."/>
            <person name="Matsubayashi T."/>
            <person name="Zaita N."/>
            <person name="Chunwongse J."/>
            <person name="Obokata J."/>
            <person name="Yamaguchi-Shinozaki K."/>
            <person name="Ohto C."/>
            <person name="Torazawa K."/>
            <person name="Meng B.-Y."/>
            <person name="Sugita M."/>
            <person name="Deno H."/>
            <person name="Kamogashira T."/>
            <person name="Yamada K."/>
            <person name="Kusuda J."/>
            <person name="Takaiwa F."/>
            <person name="Kato A."/>
            <person name="Tohdoh N."/>
            <person name="Shimada H."/>
            <person name="Sugiura M."/>
        </authorList>
    </citation>
    <scope>NUCLEOTIDE SEQUENCE [LARGE SCALE GENOMIC DNA]</scope>
    <source>
        <strain>cv. Bright Yellow 4</strain>
    </source>
</reference>
<proteinExistence type="inferred from homology"/>
<protein>
    <recommendedName>
        <fullName>Cytochrome f</fullName>
    </recommendedName>
</protein>
<dbReference type="EMBL" id="Z00044">
    <property type="protein sequence ID" value="CAA77365.1"/>
    <property type="molecule type" value="Genomic_DNA"/>
</dbReference>
<dbReference type="PIR" id="A00149">
    <property type="entry name" value="CFNT"/>
</dbReference>
<dbReference type="RefSeq" id="NP_054512.1">
    <property type="nucleotide sequence ID" value="NC_001879.2"/>
</dbReference>
<dbReference type="SMR" id="P06449"/>
<dbReference type="GeneID" id="800461"/>
<dbReference type="KEGG" id="nta:800461"/>
<dbReference type="OMA" id="PFWAQQN"/>
<dbReference type="OrthoDB" id="1251152at2759"/>
<dbReference type="Proteomes" id="UP000084051">
    <property type="component" value="Unplaced"/>
</dbReference>
<dbReference type="GO" id="GO:0009535">
    <property type="term" value="C:chloroplast thylakoid membrane"/>
    <property type="evidence" value="ECO:0007669"/>
    <property type="project" value="UniProtKB-SubCell"/>
</dbReference>
<dbReference type="GO" id="GO:0009055">
    <property type="term" value="F:electron transfer activity"/>
    <property type="evidence" value="ECO:0007669"/>
    <property type="project" value="UniProtKB-UniRule"/>
</dbReference>
<dbReference type="GO" id="GO:0020037">
    <property type="term" value="F:heme binding"/>
    <property type="evidence" value="ECO:0007669"/>
    <property type="project" value="InterPro"/>
</dbReference>
<dbReference type="GO" id="GO:0005506">
    <property type="term" value="F:iron ion binding"/>
    <property type="evidence" value="ECO:0007669"/>
    <property type="project" value="InterPro"/>
</dbReference>
<dbReference type="GO" id="GO:0015979">
    <property type="term" value="P:photosynthesis"/>
    <property type="evidence" value="ECO:0007669"/>
    <property type="project" value="UniProtKB-UniRule"/>
</dbReference>
<dbReference type="FunFam" id="1.20.5.700:FF:000001">
    <property type="entry name" value="Cytochrome f"/>
    <property type="match status" value="1"/>
</dbReference>
<dbReference type="FunFam" id="2.40.50.100:FF:000007">
    <property type="entry name" value="Cytochrome f"/>
    <property type="match status" value="1"/>
</dbReference>
<dbReference type="FunFam" id="2.60.40.830:FF:000001">
    <property type="entry name" value="Cytochrome f"/>
    <property type="match status" value="1"/>
</dbReference>
<dbReference type="Gene3D" id="2.40.50.100">
    <property type="match status" value="1"/>
</dbReference>
<dbReference type="Gene3D" id="2.60.40.830">
    <property type="entry name" value="Cytochrome f large domain"/>
    <property type="match status" value="1"/>
</dbReference>
<dbReference type="Gene3D" id="1.20.5.700">
    <property type="entry name" value="Single helix bin"/>
    <property type="match status" value="1"/>
</dbReference>
<dbReference type="HAMAP" id="MF_00610">
    <property type="entry name" value="Cytb6_f_cytF"/>
    <property type="match status" value="1"/>
</dbReference>
<dbReference type="InterPro" id="IPR024058">
    <property type="entry name" value="Cyt-f_TM"/>
</dbReference>
<dbReference type="InterPro" id="IPR002325">
    <property type="entry name" value="Cyt_f"/>
</dbReference>
<dbReference type="InterPro" id="IPR024094">
    <property type="entry name" value="Cyt_f_lg_dom"/>
</dbReference>
<dbReference type="InterPro" id="IPR036826">
    <property type="entry name" value="Cyt_f_lg_dom_sf"/>
</dbReference>
<dbReference type="InterPro" id="IPR011054">
    <property type="entry name" value="Rudment_hybrid_motif"/>
</dbReference>
<dbReference type="PANTHER" id="PTHR33288">
    <property type="match status" value="1"/>
</dbReference>
<dbReference type="PANTHER" id="PTHR33288:SF10">
    <property type="entry name" value="CYTOCHROME F"/>
    <property type="match status" value="1"/>
</dbReference>
<dbReference type="Pfam" id="PF01333">
    <property type="entry name" value="Apocytochr_F_C"/>
    <property type="match status" value="1"/>
</dbReference>
<dbReference type="Pfam" id="PF16639">
    <property type="entry name" value="Apocytochr_F_N"/>
    <property type="match status" value="1"/>
</dbReference>
<dbReference type="PRINTS" id="PR00610">
    <property type="entry name" value="CYTOCHROMEF"/>
</dbReference>
<dbReference type="SUPFAM" id="SSF103431">
    <property type="entry name" value="Cytochrome f subunit of the cytochrome b6f complex, transmembrane anchor"/>
    <property type="match status" value="1"/>
</dbReference>
<dbReference type="SUPFAM" id="SSF49441">
    <property type="entry name" value="Cytochrome f, large domain"/>
    <property type="match status" value="1"/>
</dbReference>
<dbReference type="SUPFAM" id="SSF51246">
    <property type="entry name" value="Rudiment single hybrid motif"/>
    <property type="match status" value="1"/>
</dbReference>
<dbReference type="PROSITE" id="PS51010">
    <property type="entry name" value="CYTF"/>
    <property type="match status" value="1"/>
</dbReference>
<comment type="function">
    <text evidence="1">Component of the cytochrome b6-f complex, which mediates electron transfer between photosystem II (PSII) and photosystem I (PSI), cyclic electron flow around PSI, and state transitions.</text>
</comment>
<comment type="cofactor">
    <cofactor evidence="1">
        <name>heme</name>
        <dbReference type="ChEBI" id="CHEBI:30413"/>
    </cofactor>
    <text evidence="1">Binds 1 heme group covalently.</text>
</comment>
<comment type="subunit">
    <text evidence="1">The 4 large subunits of the cytochrome b6-f complex are cytochrome b6, subunit IV (17 kDa polypeptide, petD), cytochrome f and the Rieske protein, while the 4 small subunits are PetG, PetL, PetM and PetN. The complex functions as a dimer (By similarity).</text>
</comment>
<comment type="subcellular location">
    <subcellularLocation>
        <location evidence="1">Plastid</location>
        <location evidence="1">Chloroplast thylakoid membrane</location>
        <topology evidence="1">Single-pass membrane protein</topology>
    </subcellularLocation>
</comment>
<comment type="similarity">
    <text evidence="3">Belongs to the cytochrome f family.</text>
</comment>
<keyword id="KW-0150">Chloroplast</keyword>
<keyword id="KW-0249">Electron transport</keyword>
<keyword id="KW-0349">Heme</keyword>
<keyword id="KW-0408">Iron</keyword>
<keyword id="KW-0472">Membrane</keyword>
<keyword id="KW-0479">Metal-binding</keyword>
<keyword id="KW-0602">Photosynthesis</keyword>
<keyword id="KW-0934">Plastid</keyword>
<keyword id="KW-1185">Reference proteome</keyword>
<keyword id="KW-0732">Signal</keyword>
<keyword id="KW-0793">Thylakoid</keyword>
<keyword id="KW-0812">Transmembrane</keyword>
<keyword id="KW-1133">Transmembrane helix</keyword>
<keyword id="KW-0813">Transport</keyword>
<evidence type="ECO:0000250" key="1"/>
<evidence type="ECO:0000255" key="2"/>
<evidence type="ECO:0000305" key="3"/>
<sequence length="320" mass="35246">MQTRNAFSWLKKQITRSISVSLMIYILTRTSISSAYPIFAQQGYENPREATGRIVCANCHLANKPVEIEVPQAVLPDTVFEAVVRIPYDMQLKQVLANGKRGGLNVGAVLILPEGFELAPPDRISPEMKEKIGNLSFQSYRPNKKNILVIGPVPGQKYSEITFPILSPDPATKKDVHFLKYPIYVGGNRGRGQIYPDGSKSNNTVYNATAAGIVSKIIRKEKGGYEITITDASDGRQVVDIIPPGPELLVSEGESIKFDQPLTSNPNVGGFGQGDAEIVLQDPLRVQGLLFFLASVILAQIFLVLKKKQFEKVQLAEMNF</sequence>
<gene>
    <name type="primary">petA</name>
</gene>
<feature type="signal peptide" evidence="1">
    <location>
        <begin position="1"/>
        <end position="35"/>
    </location>
</feature>
<feature type="chain" id="PRO_0000023838" description="Cytochrome f">
    <location>
        <begin position="36"/>
        <end position="320"/>
    </location>
</feature>
<feature type="transmembrane region" description="Helical" evidence="2">
    <location>
        <begin position="286"/>
        <end position="305"/>
    </location>
</feature>
<feature type="binding site" description="axial binding residue" evidence="1">
    <location>
        <position position="36"/>
    </location>
    <ligand>
        <name>heme</name>
        <dbReference type="ChEBI" id="CHEBI:30413"/>
    </ligand>
    <ligandPart>
        <name>Fe</name>
        <dbReference type="ChEBI" id="CHEBI:18248"/>
    </ligandPart>
</feature>
<feature type="binding site" description="covalent" evidence="1">
    <location>
        <position position="56"/>
    </location>
    <ligand>
        <name>heme</name>
        <dbReference type="ChEBI" id="CHEBI:30413"/>
    </ligand>
</feature>
<feature type="binding site" description="covalent" evidence="1">
    <location>
        <position position="59"/>
    </location>
    <ligand>
        <name>heme</name>
        <dbReference type="ChEBI" id="CHEBI:30413"/>
    </ligand>
</feature>
<feature type="binding site" description="axial binding residue" evidence="1">
    <location>
        <position position="60"/>
    </location>
    <ligand>
        <name>heme</name>
        <dbReference type="ChEBI" id="CHEBI:30413"/>
    </ligand>
    <ligandPart>
        <name>Fe</name>
        <dbReference type="ChEBI" id="CHEBI:18248"/>
    </ligandPart>
</feature>
<organism>
    <name type="scientific">Nicotiana tabacum</name>
    <name type="common">Common tobacco</name>
    <dbReference type="NCBI Taxonomy" id="4097"/>
    <lineage>
        <taxon>Eukaryota</taxon>
        <taxon>Viridiplantae</taxon>
        <taxon>Streptophyta</taxon>
        <taxon>Embryophyta</taxon>
        <taxon>Tracheophyta</taxon>
        <taxon>Spermatophyta</taxon>
        <taxon>Magnoliopsida</taxon>
        <taxon>eudicotyledons</taxon>
        <taxon>Gunneridae</taxon>
        <taxon>Pentapetalae</taxon>
        <taxon>asterids</taxon>
        <taxon>lamiids</taxon>
        <taxon>Solanales</taxon>
        <taxon>Solanaceae</taxon>
        <taxon>Nicotianoideae</taxon>
        <taxon>Nicotianeae</taxon>
        <taxon>Nicotiana</taxon>
    </lineage>
</organism>
<accession>P06449</accession>